<evidence type="ECO:0000255" key="1">
    <source>
        <dbReference type="HAMAP-Rule" id="MF_00229"/>
    </source>
</evidence>
<reference key="1">
    <citation type="submission" date="2002-12" db="EMBL/GenBank/DDBJ databases">
        <title>Complete genome sequence of Vibrio vulnificus CMCP6.</title>
        <authorList>
            <person name="Rhee J.H."/>
            <person name="Kim S.Y."/>
            <person name="Chung S.S."/>
            <person name="Kim J.J."/>
            <person name="Moon Y.H."/>
            <person name="Jeong H."/>
            <person name="Choy H.E."/>
        </authorList>
    </citation>
    <scope>NUCLEOTIDE SEQUENCE [LARGE SCALE GENOMIC DNA]</scope>
    <source>
        <strain>CMCP6</strain>
    </source>
</reference>
<sequence>MDMLNLTLKPGCLSLNQLRQVSRSPINLSLDASAIPAIEESTQVVERVIAEDRTVYGINTGFGLLANTRIAPEDLETLQRSIVLSHAAGIGEFMADETVRLMMVLKINSLSRGYSGIRLNVIQMLIDLVNAQVYPCVPQKGSVGASGDLAPLAHMSTVLLGEGQARHNGKIISGLEALKIAGLEPITLAPKEGLALLNGTQASTAFALEGLFIAEDLFASATVCGAMSVEAALGSRRPFDPRIHRVRGHRSQMDSAMAYRHLLDTSSEIGQSHSNCEKVQDPYSLRCQPQVMGACLQQIRNSAEILLVESNSVSDNPLVFAEDDDIISGGNFHAEPVAMAADNLALAIAEIGSLSERRMALLIDSALSKLPPFLVDNGGVNSGFMIAQVTSAALASENKTLAHPASVDSLPTSANQEDHVSMATFAARRLREMGENTRGILAVEYLSAAQGLDFRAPHKSSPRIEQAKQMLREKVSFYDKDRYFAPDIEKANSLLKLAMHNVLMPEALLPSVL</sequence>
<name>HUTH_VIBVU</name>
<dbReference type="EC" id="4.3.1.3" evidence="1"/>
<dbReference type="EMBL" id="AE016795">
    <property type="protein sequence ID" value="AAO10763.1"/>
    <property type="molecule type" value="Genomic_DNA"/>
</dbReference>
<dbReference type="RefSeq" id="WP_011080256.1">
    <property type="nucleotide sequence ID" value="NC_004459.3"/>
</dbReference>
<dbReference type="SMR" id="Q8DA21"/>
<dbReference type="KEGG" id="vvu:VV1_2389"/>
<dbReference type="HOGENOM" id="CLU_014801_4_0_6"/>
<dbReference type="UniPathway" id="UPA00379">
    <property type="reaction ID" value="UER00549"/>
</dbReference>
<dbReference type="Proteomes" id="UP000002275">
    <property type="component" value="Chromosome 1"/>
</dbReference>
<dbReference type="GO" id="GO:0005737">
    <property type="term" value="C:cytoplasm"/>
    <property type="evidence" value="ECO:0007669"/>
    <property type="project" value="UniProtKB-SubCell"/>
</dbReference>
<dbReference type="GO" id="GO:0004397">
    <property type="term" value="F:histidine ammonia-lyase activity"/>
    <property type="evidence" value="ECO:0007669"/>
    <property type="project" value="UniProtKB-UniRule"/>
</dbReference>
<dbReference type="GO" id="GO:0019556">
    <property type="term" value="P:L-histidine catabolic process to glutamate and formamide"/>
    <property type="evidence" value="ECO:0007669"/>
    <property type="project" value="UniProtKB-UniPathway"/>
</dbReference>
<dbReference type="GO" id="GO:0019557">
    <property type="term" value="P:L-histidine catabolic process to glutamate and formate"/>
    <property type="evidence" value="ECO:0007669"/>
    <property type="project" value="UniProtKB-UniPathway"/>
</dbReference>
<dbReference type="CDD" id="cd00332">
    <property type="entry name" value="PAL-HAL"/>
    <property type="match status" value="1"/>
</dbReference>
<dbReference type="FunFam" id="1.10.275.10:FF:000005">
    <property type="entry name" value="Histidine ammonia-lyase"/>
    <property type="match status" value="1"/>
</dbReference>
<dbReference type="FunFam" id="1.20.200.10:FF:000003">
    <property type="entry name" value="Histidine ammonia-lyase"/>
    <property type="match status" value="1"/>
</dbReference>
<dbReference type="Gene3D" id="1.20.200.10">
    <property type="entry name" value="Fumarase/aspartase (Central domain)"/>
    <property type="match status" value="1"/>
</dbReference>
<dbReference type="Gene3D" id="1.10.275.10">
    <property type="entry name" value="Fumarase/aspartase (N-terminal domain)"/>
    <property type="match status" value="1"/>
</dbReference>
<dbReference type="HAMAP" id="MF_00229">
    <property type="entry name" value="His_ammonia_lyase"/>
    <property type="match status" value="1"/>
</dbReference>
<dbReference type="InterPro" id="IPR001106">
    <property type="entry name" value="Aromatic_Lyase"/>
</dbReference>
<dbReference type="InterPro" id="IPR024083">
    <property type="entry name" value="Fumarase/histidase_N"/>
</dbReference>
<dbReference type="InterPro" id="IPR005921">
    <property type="entry name" value="HutH"/>
</dbReference>
<dbReference type="InterPro" id="IPR008948">
    <property type="entry name" value="L-Aspartase-like"/>
</dbReference>
<dbReference type="InterPro" id="IPR022313">
    <property type="entry name" value="Phe/His_NH3-lyase_AS"/>
</dbReference>
<dbReference type="NCBIfam" id="TIGR01225">
    <property type="entry name" value="hutH"/>
    <property type="match status" value="1"/>
</dbReference>
<dbReference type="NCBIfam" id="NF006871">
    <property type="entry name" value="PRK09367.1"/>
    <property type="match status" value="1"/>
</dbReference>
<dbReference type="PANTHER" id="PTHR10362">
    <property type="entry name" value="HISTIDINE AMMONIA-LYASE"/>
    <property type="match status" value="1"/>
</dbReference>
<dbReference type="Pfam" id="PF00221">
    <property type="entry name" value="Lyase_aromatic"/>
    <property type="match status" value="1"/>
</dbReference>
<dbReference type="SUPFAM" id="SSF48557">
    <property type="entry name" value="L-aspartase-like"/>
    <property type="match status" value="1"/>
</dbReference>
<dbReference type="PROSITE" id="PS00488">
    <property type="entry name" value="PAL_HISTIDASE"/>
    <property type="match status" value="1"/>
</dbReference>
<comment type="catalytic activity">
    <reaction evidence="1">
        <text>L-histidine = trans-urocanate + NH4(+)</text>
        <dbReference type="Rhea" id="RHEA:21232"/>
        <dbReference type="ChEBI" id="CHEBI:17771"/>
        <dbReference type="ChEBI" id="CHEBI:28938"/>
        <dbReference type="ChEBI" id="CHEBI:57595"/>
        <dbReference type="EC" id="4.3.1.3"/>
    </reaction>
</comment>
<comment type="pathway">
    <text evidence="1">Amino-acid degradation; L-histidine degradation into L-glutamate; N-formimidoyl-L-glutamate from L-histidine: step 1/3.</text>
</comment>
<comment type="subcellular location">
    <subcellularLocation>
        <location evidence="1">Cytoplasm</location>
    </subcellularLocation>
</comment>
<comment type="PTM">
    <text evidence="1">Contains an active site 4-methylidene-imidazol-5-one (MIO), which is formed autocatalytically by cyclization and dehydration of residues Ala-Ser-Gly.</text>
</comment>
<comment type="similarity">
    <text evidence="1">Belongs to the PAL/histidase family.</text>
</comment>
<feature type="chain" id="PRO_0000161049" description="Histidine ammonia-lyase">
    <location>
        <begin position="1"/>
        <end position="513"/>
    </location>
</feature>
<feature type="modified residue" description="2,3-didehydroalanine (Ser)" evidence="1">
    <location>
        <position position="146"/>
    </location>
</feature>
<feature type="cross-link" description="5-imidazolinone (Ala-Gly)" evidence="1">
    <location>
        <begin position="145"/>
        <end position="147"/>
    </location>
</feature>
<gene>
    <name evidence="1" type="primary">hutH</name>
    <name type="ordered locus">VV1_2389</name>
</gene>
<organism>
    <name type="scientific">Vibrio vulnificus (strain CMCP6)</name>
    <dbReference type="NCBI Taxonomy" id="216895"/>
    <lineage>
        <taxon>Bacteria</taxon>
        <taxon>Pseudomonadati</taxon>
        <taxon>Pseudomonadota</taxon>
        <taxon>Gammaproteobacteria</taxon>
        <taxon>Vibrionales</taxon>
        <taxon>Vibrionaceae</taxon>
        <taxon>Vibrio</taxon>
    </lineage>
</organism>
<accession>Q8DA21</accession>
<proteinExistence type="inferred from homology"/>
<keyword id="KW-0963">Cytoplasm</keyword>
<keyword id="KW-0369">Histidine metabolism</keyword>
<keyword id="KW-0456">Lyase</keyword>
<protein>
    <recommendedName>
        <fullName evidence="1">Histidine ammonia-lyase</fullName>
        <shortName evidence="1">Histidase</shortName>
        <ecNumber evidence="1">4.3.1.3</ecNumber>
    </recommendedName>
</protein>